<sequence length="88" mass="9595">MLNTTFDQVMEFPNSCPFKVIGDADDTLADRVVAVAQQLAPGDYVPSVKASSKGSYYSVTIRITVTSKEHIEKAYIDLAAIEGVKRVL</sequence>
<keyword id="KW-1185">Reference proteome</keyword>
<protein>
    <recommendedName>
        <fullName evidence="1">UPF0250 protein Sfri_0694</fullName>
    </recommendedName>
</protein>
<comment type="similarity">
    <text evidence="1">Belongs to the UPF0250 family.</text>
</comment>
<name>Y694_SHEFN</name>
<proteinExistence type="inferred from homology"/>
<reference key="1">
    <citation type="submission" date="2006-08" db="EMBL/GenBank/DDBJ databases">
        <title>Complete sequence of Shewanella frigidimarina NCIMB 400.</title>
        <authorList>
            <consortium name="US DOE Joint Genome Institute"/>
            <person name="Copeland A."/>
            <person name="Lucas S."/>
            <person name="Lapidus A."/>
            <person name="Barry K."/>
            <person name="Detter J.C."/>
            <person name="Glavina del Rio T."/>
            <person name="Hammon N."/>
            <person name="Israni S."/>
            <person name="Dalin E."/>
            <person name="Tice H."/>
            <person name="Pitluck S."/>
            <person name="Fredrickson J.K."/>
            <person name="Kolker E."/>
            <person name="McCuel L.A."/>
            <person name="DiChristina T."/>
            <person name="Nealson K.H."/>
            <person name="Newman D."/>
            <person name="Tiedje J.M."/>
            <person name="Zhou J."/>
            <person name="Romine M.F."/>
            <person name="Culley D.E."/>
            <person name="Serres M."/>
            <person name="Chertkov O."/>
            <person name="Brettin T."/>
            <person name="Bruce D."/>
            <person name="Han C."/>
            <person name="Tapia R."/>
            <person name="Gilna P."/>
            <person name="Schmutz J."/>
            <person name="Larimer F."/>
            <person name="Land M."/>
            <person name="Hauser L."/>
            <person name="Kyrpides N."/>
            <person name="Mikhailova N."/>
            <person name="Richardson P."/>
        </authorList>
    </citation>
    <scope>NUCLEOTIDE SEQUENCE [LARGE SCALE GENOMIC DNA]</scope>
    <source>
        <strain>NCIMB 400</strain>
    </source>
</reference>
<evidence type="ECO:0000255" key="1">
    <source>
        <dbReference type="HAMAP-Rule" id="MF_00659"/>
    </source>
</evidence>
<accession>Q087L3</accession>
<gene>
    <name type="ordered locus">Sfri_0694</name>
</gene>
<organism>
    <name type="scientific">Shewanella frigidimarina (strain NCIMB 400)</name>
    <dbReference type="NCBI Taxonomy" id="318167"/>
    <lineage>
        <taxon>Bacteria</taxon>
        <taxon>Pseudomonadati</taxon>
        <taxon>Pseudomonadota</taxon>
        <taxon>Gammaproteobacteria</taxon>
        <taxon>Alteromonadales</taxon>
        <taxon>Shewanellaceae</taxon>
        <taxon>Shewanella</taxon>
    </lineage>
</organism>
<dbReference type="EMBL" id="CP000447">
    <property type="protein sequence ID" value="ABI70552.1"/>
    <property type="molecule type" value="Genomic_DNA"/>
</dbReference>
<dbReference type="SMR" id="Q087L3"/>
<dbReference type="STRING" id="318167.Sfri_0694"/>
<dbReference type="KEGG" id="sfr:Sfri_0694"/>
<dbReference type="eggNOG" id="COG2921">
    <property type="taxonomic scope" value="Bacteria"/>
</dbReference>
<dbReference type="HOGENOM" id="CLU_161438_2_1_6"/>
<dbReference type="OrthoDB" id="9793424at2"/>
<dbReference type="Proteomes" id="UP000000684">
    <property type="component" value="Chromosome"/>
</dbReference>
<dbReference type="GO" id="GO:0005829">
    <property type="term" value="C:cytosol"/>
    <property type="evidence" value="ECO:0007669"/>
    <property type="project" value="TreeGrafter"/>
</dbReference>
<dbReference type="Gene3D" id="3.30.70.260">
    <property type="match status" value="1"/>
</dbReference>
<dbReference type="HAMAP" id="MF_00659">
    <property type="entry name" value="UPF0250"/>
    <property type="match status" value="1"/>
</dbReference>
<dbReference type="InterPro" id="IPR007454">
    <property type="entry name" value="UPF0250_YbeD-like"/>
</dbReference>
<dbReference type="InterPro" id="IPR027471">
    <property type="entry name" value="YbeD-like_sf"/>
</dbReference>
<dbReference type="NCBIfam" id="NF003447">
    <property type="entry name" value="PRK04998.1"/>
    <property type="match status" value="1"/>
</dbReference>
<dbReference type="PANTHER" id="PTHR38036">
    <property type="entry name" value="UPF0250 PROTEIN YBED"/>
    <property type="match status" value="1"/>
</dbReference>
<dbReference type="PANTHER" id="PTHR38036:SF1">
    <property type="entry name" value="UPF0250 PROTEIN YBED"/>
    <property type="match status" value="1"/>
</dbReference>
<dbReference type="Pfam" id="PF04359">
    <property type="entry name" value="DUF493"/>
    <property type="match status" value="1"/>
</dbReference>
<dbReference type="SUPFAM" id="SSF117991">
    <property type="entry name" value="YbeD/HP0495-like"/>
    <property type="match status" value="1"/>
</dbReference>
<feature type="chain" id="PRO_1000061892" description="UPF0250 protein Sfri_0694">
    <location>
        <begin position="1"/>
        <end position="88"/>
    </location>
</feature>